<dbReference type="EC" id="1.9.6.1" evidence="1"/>
<dbReference type="EMBL" id="AL590842">
    <property type="protein sequence ID" value="CAL21640.1"/>
    <property type="molecule type" value="Genomic_DNA"/>
</dbReference>
<dbReference type="EMBL" id="AE017042">
    <property type="protein sequence ID" value="AAS62853.1"/>
    <property type="molecule type" value="Genomic_DNA"/>
</dbReference>
<dbReference type="PIR" id="AE0369">
    <property type="entry name" value="AE0369"/>
</dbReference>
<dbReference type="RefSeq" id="WP_002208534.1">
    <property type="nucleotide sequence ID" value="NZ_WHLN01000014.1"/>
</dbReference>
<dbReference type="RefSeq" id="YP_002347958.1">
    <property type="nucleotide sequence ID" value="NC_003143.1"/>
</dbReference>
<dbReference type="SMR" id="Q8ZCF3"/>
<dbReference type="STRING" id="214092.YPO3038"/>
<dbReference type="PaxDb" id="214092-YPO3038"/>
<dbReference type="EnsemblBacteria" id="AAS62853">
    <property type="protein sequence ID" value="AAS62853"/>
    <property type="gene ID" value="YP_2661"/>
</dbReference>
<dbReference type="GeneID" id="57975664"/>
<dbReference type="KEGG" id="ype:YPO3038"/>
<dbReference type="KEGG" id="ypm:YP_2661"/>
<dbReference type="PATRIC" id="fig|214092.21.peg.3492"/>
<dbReference type="eggNOG" id="COG0243">
    <property type="taxonomic scope" value="Bacteria"/>
</dbReference>
<dbReference type="HOGENOM" id="CLU_000422_13_4_6"/>
<dbReference type="OMA" id="GMNAHQH"/>
<dbReference type="OrthoDB" id="9816402at2"/>
<dbReference type="Proteomes" id="UP000000815">
    <property type="component" value="Chromosome"/>
</dbReference>
<dbReference type="Proteomes" id="UP000001019">
    <property type="component" value="Chromosome"/>
</dbReference>
<dbReference type="GO" id="GO:0016020">
    <property type="term" value="C:membrane"/>
    <property type="evidence" value="ECO:0000318"/>
    <property type="project" value="GO_Central"/>
</dbReference>
<dbReference type="GO" id="GO:0009325">
    <property type="term" value="C:nitrate reductase complex"/>
    <property type="evidence" value="ECO:0000318"/>
    <property type="project" value="GO_Central"/>
</dbReference>
<dbReference type="GO" id="GO:0042597">
    <property type="term" value="C:periplasmic space"/>
    <property type="evidence" value="ECO:0007669"/>
    <property type="project" value="UniProtKB-SubCell"/>
</dbReference>
<dbReference type="GO" id="GO:0051539">
    <property type="term" value="F:4 iron, 4 sulfur cluster binding"/>
    <property type="evidence" value="ECO:0007669"/>
    <property type="project" value="UniProtKB-KW"/>
</dbReference>
<dbReference type="GO" id="GO:0009055">
    <property type="term" value="F:electron transfer activity"/>
    <property type="evidence" value="ECO:0007669"/>
    <property type="project" value="UniProtKB-UniRule"/>
</dbReference>
<dbReference type="GO" id="GO:0005506">
    <property type="term" value="F:iron ion binding"/>
    <property type="evidence" value="ECO:0007669"/>
    <property type="project" value="UniProtKB-UniRule"/>
</dbReference>
<dbReference type="GO" id="GO:0030151">
    <property type="term" value="F:molybdenum ion binding"/>
    <property type="evidence" value="ECO:0000318"/>
    <property type="project" value="GO_Central"/>
</dbReference>
<dbReference type="GO" id="GO:0043546">
    <property type="term" value="F:molybdopterin cofactor binding"/>
    <property type="evidence" value="ECO:0007669"/>
    <property type="project" value="InterPro"/>
</dbReference>
<dbReference type="GO" id="GO:0050140">
    <property type="term" value="F:nitrate reductase (cytochrome) activity"/>
    <property type="evidence" value="ECO:0007669"/>
    <property type="project" value="UniProtKB-EC"/>
</dbReference>
<dbReference type="GO" id="GO:0008940">
    <property type="term" value="F:nitrate reductase activity"/>
    <property type="evidence" value="ECO:0000318"/>
    <property type="project" value="GO_Central"/>
</dbReference>
<dbReference type="GO" id="GO:0045333">
    <property type="term" value="P:cellular respiration"/>
    <property type="evidence" value="ECO:0007669"/>
    <property type="project" value="UniProtKB-ARBA"/>
</dbReference>
<dbReference type="GO" id="GO:0006777">
    <property type="term" value="P:Mo-molybdopterin cofactor biosynthetic process"/>
    <property type="evidence" value="ECO:0007669"/>
    <property type="project" value="UniProtKB-UniRule"/>
</dbReference>
<dbReference type="GO" id="GO:0042128">
    <property type="term" value="P:nitrate assimilation"/>
    <property type="evidence" value="ECO:0007669"/>
    <property type="project" value="UniProtKB-UniRule"/>
</dbReference>
<dbReference type="CDD" id="cd02791">
    <property type="entry name" value="MopB_CT_Nitrate-R-NapA-like"/>
    <property type="match status" value="1"/>
</dbReference>
<dbReference type="CDD" id="cd02754">
    <property type="entry name" value="MopB_Nitrate-R-NapA-like"/>
    <property type="match status" value="1"/>
</dbReference>
<dbReference type="FunFam" id="2.40.40.20:FF:000005">
    <property type="entry name" value="Periplasmic nitrate reductase"/>
    <property type="match status" value="1"/>
</dbReference>
<dbReference type="Gene3D" id="2.40.40.20">
    <property type="match status" value="1"/>
</dbReference>
<dbReference type="Gene3D" id="3.30.200.210">
    <property type="match status" value="1"/>
</dbReference>
<dbReference type="Gene3D" id="3.40.50.740">
    <property type="match status" value="1"/>
</dbReference>
<dbReference type="Gene3D" id="3.40.228.10">
    <property type="entry name" value="Dimethylsulfoxide Reductase, domain 2"/>
    <property type="match status" value="1"/>
</dbReference>
<dbReference type="HAMAP" id="MF_01630">
    <property type="entry name" value="Nitrate_reduct_NapA"/>
    <property type="match status" value="1"/>
</dbReference>
<dbReference type="InterPro" id="IPR009010">
    <property type="entry name" value="Asp_de-COase-like_dom_sf"/>
</dbReference>
<dbReference type="InterPro" id="IPR041957">
    <property type="entry name" value="CT_Nitrate-R-NapA-like"/>
</dbReference>
<dbReference type="InterPro" id="IPR006657">
    <property type="entry name" value="MoPterin_dinucl-bd_dom"/>
</dbReference>
<dbReference type="InterPro" id="IPR006656">
    <property type="entry name" value="Mopterin_OxRdtase"/>
</dbReference>
<dbReference type="InterPro" id="IPR006963">
    <property type="entry name" value="Mopterin_OxRdtase_4Fe-4S_dom"/>
</dbReference>
<dbReference type="InterPro" id="IPR027467">
    <property type="entry name" value="MopterinOxRdtase_cofactor_BS"/>
</dbReference>
<dbReference type="InterPro" id="IPR010051">
    <property type="entry name" value="Periplasm_NO3_reductase_lsu"/>
</dbReference>
<dbReference type="InterPro" id="IPR050123">
    <property type="entry name" value="Prok_molybdopt-oxidoreductase"/>
</dbReference>
<dbReference type="InterPro" id="IPR006311">
    <property type="entry name" value="TAT_signal"/>
</dbReference>
<dbReference type="InterPro" id="IPR019546">
    <property type="entry name" value="TAT_signal_bac_arc"/>
</dbReference>
<dbReference type="NCBIfam" id="TIGR01706">
    <property type="entry name" value="NAPA"/>
    <property type="match status" value="1"/>
</dbReference>
<dbReference type="NCBIfam" id="NF010055">
    <property type="entry name" value="PRK13532.1"/>
    <property type="match status" value="1"/>
</dbReference>
<dbReference type="NCBIfam" id="TIGR01409">
    <property type="entry name" value="TAT_signal_seq"/>
    <property type="match status" value="1"/>
</dbReference>
<dbReference type="PANTHER" id="PTHR43105:SF11">
    <property type="entry name" value="PERIPLASMIC NITRATE REDUCTASE"/>
    <property type="match status" value="1"/>
</dbReference>
<dbReference type="PANTHER" id="PTHR43105">
    <property type="entry name" value="RESPIRATORY NITRATE REDUCTASE"/>
    <property type="match status" value="1"/>
</dbReference>
<dbReference type="Pfam" id="PF04879">
    <property type="entry name" value="Molybdop_Fe4S4"/>
    <property type="match status" value="1"/>
</dbReference>
<dbReference type="Pfam" id="PF00384">
    <property type="entry name" value="Molybdopterin"/>
    <property type="match status" value="1"/>
</dbReference>
<dbReference type="Pfam" id="PF01568">
    <property type="entry name" value="Molydop_binding"/>
    <property type="match status" value="1"/>
</dbReference>
<dbReference type="Pfam" id="PF10518">
    <property type="entry name" value="TAT_signal"/>
    <property type="match status" value="1"/>
</dbReference>
<dbReference type="SMART" id="SM00926">
    <property type="entry name" value="Molybdop_Fe4S4"/>
    <property type="match status" value="1"/>
</dbReference>
<dbReference type="SUPFAM" id="SSF50692">
    <property type="entry name" value="ADC-like"/>
    <property type="match status" value="1"/>
</dbReference>
<dbReference type="SUPFAM" id="SSF53706">
    <property type="entry name" value="Formate dehydrogenase/DMSO reductase, domains 1-3"/>
    <property type="match status" value="1"/>
</dbReference>
<dbReference type="PROSITE" id="PS51669">
    <property type="entry name" value="4FE4S_MOW_BIS_MGD"/>
    <property type="match status" value="1"/>
</dbReference>
<dbReference type="PROSITE" id="PS00551">
    <property type="entry name" value="MOLYBDOPTERIN_PROK_1"/>
    <property type="match status" value="1"/>
</dbReference>
<dbReference type="PROSITE" id="PS51318">
    <property type="entry name" value="TAT"/>
    <property type="match status" value="1"/>
</dbReference>
<accession>Q8ZCF3</accession>
<accession>Q0WCN0</accession>
<accession>Q74SF1</accession>
<gene>
    <name evidence="1" type="primary">napA</name>
    <name type="ordered locus">YPO3038</name>
    <name type="ordered locus">YP_2661</name>
</gene>
<sequence length="830" mass="93226">MKLSRRDFMKANAAVAAAAAAGMTIPTVAKAVGETTNAIKWDKAPCRFCGTGCGVLVGTQNGRIVASQGDPDSPVNRGLNCIKGYFLPKIMYGKDRLTQPLLRMKDGQYDKEGDFTPISWEKAFDIMELKFKNALKEKGPTAVGMFGSGQWTVWEGYAALKLLKGGFRSNNLDPNARHCMASSVVGFMRTFGMDEPMGCYDDIEEADAFVLWGSNMAEMHPVLWSRMTSRRLTNAHVRIAVLSTYEHRSFELADNPIVFTPQTDLVIMNYIANYIIQNNAVDKDFLAQHVNFRRGATDIGYGLRPTHPLEKAAKNPGSDASEPMSFEDFKTFVAEYTLEKAAKMSGVPEDQLESLAQLYADPKVKLVSYWTMGFNQHTRGVWANNMCYNLHLLTGKISTPGSGPFSLTGQPSACGTAREVGTFSHRLPADMVVTNEKHRQIAETTWQLPAGTIPEKVGLHAVAQDRALKDGTLNAYWVMCNNNMQAGPNINEERMPGWRDPRNFIVVSDPYPTISALSADLILPTSMWVEKEGAYGNAERRTQFWRQQVPSPGEAKSDLWQIVEFAKRFNVEEVWPAELVNQKPEYRGKNLYEVLFANDVVSKYPLSEIPDDQLNDEARDFGFYIQKGLFEEYASFGRGHAHDLAPFDVYHQVRGLRWPVVDGKETLWRYREGFDPFVPKGEEVRFYGKPDGKAVIFALPYEPAAESPDQEYDLWLSTGRVLEHWHTGSMTRRVPELHRAFPEAVLFIHPLDAKARGLHRGDKVKVISRRGEVISLVETRGRNRPPRGLVYMPFFDAAQLVNNLTLDATDPLSKETDFKKCAVKLERVVA</sequence>
<keyword id="KW-0004">4Fe-4S</keyword>
<keyword id="KW-0249">Electron transport</keyword>
<keyword id="KW-0408">Iron</keyword>
<keyword id="KW-0411">Iron-sulfur</keyword>
<keyword id="KW-0479">Metal-binding</keyword>
<keyword id="KW-0500">Molybdenum</keyword>
<keyword id="KW-0534">Nitrate assimilation</keyword>
<keyword id="KW-0560">Oxidoreductase</keyword>
<keyword id="KW-0574">Periplasm</keyword>
<keyword id="KW-1185">Reference proteome</keyword>
<keyword id="KW-0732">Signal</keyword>
<keyword id="KW-0813">Transport</keyword>
<comment type="function">
    <text evidence="1">Catalytic subunit of the periplasmic nitrate reductase complex NapAB. Receives electrons from NapB and catalyzes the reduction of nitrate to nitrite.</text>
</comment>
<comment type="catalytic activity">
    <reaction evidence="1">
        <text>2 Fe(II)-[cytochrome] + nitrate + 2 H(+) = 2 Fe(III)-[cytochrome] + nitrite + H2O</text>
        <dbReference type="Rhea" id="RHEA:12909"/>
        <dbReference type="Rhea" id="RHEA-COMP:11777"/>
        <dbReference type="Rhea" id="RHEA-COMP:11778"/>
        <dbReference type="ChEBI" id="CHEBI:15377"/>
        <dbReference type="ChEBI" id="CHEBI:15378"/>
        <dbReference type="ChEBI" id="CHEBI:16301"/>
        <dbReference type="ChEBI" id="CHEBI:17632"/>
        <dbReference type="ChEBI" id="CHEBI:29033"/>
        <dbReference type="ChEBI" id="CHEBI:29034"/>
        <dbReference type="EC" id="1.9.6.1"/>
    </reaction>
</comment>
<comment type="cofactor">
    <cofactor evidence="1">
        <name>[4Fe-4S] cluster</name>
        <dbReference type="ChEBI" id="CHEBI:49883"/>
    </cofactor>
    <text evidence="1">Binds 1 [4Fe-4S] cluster.</text>
</comment>
<comment type="cofactor">
    <cofactor evidence="1">
        <name>Mo-bis(molybdopterin guanine dinucleotide)</name>
        <dbReference type="ChEBI" id="CHEBI:60539"/>
    </cofactor>
    <text evidence="1">Binds 1 molybdenum-bis(molybdopterin guanine dinucleotide) (Mo-bis-MGD) cofactor per subunit.</text>
</comment>
<comment type="subunit">
    <text evidence="1">Component of the periplasmic nitrate reductase NapAB complex composed of NapA and NapB.</text>
</comment>
<comment type="subcellular location">
    <subcellularLocation>
        <location evidence="1">Periplasm</location>
    </subcellularLocation>
</comment>
<comment type="PTM">
    <text evidence="1">Predicted to be exported by the Tat system. The position of the signal peptide cleavage has not been experimentally proven.</text>
</comment>
<comment type="similarity">
    <text evidence="1">Belongs to the prokaryotic molybdopterin-containing oxidoreductase family. NasA/NapA/NarB subfamily.</text>
</comment>
<evidence type="ECO:0000255" key="1">
    <source>
        <dbReference type="HAMAP-Rule" id="MF_01630"/>
    </source>
</evidence>
<evidence type="ECO:0000305" key="2"/>
<name>NAPA_YERPE</name>
<organism>
    <name type="scientific">Yersinia pestis</name>
    <dbReference type="NCBI Taxonomy" id="632"/>
    <lineage>
        <taxon>Bacteria</taxon>
        <taxon>Pseudomonadati</taxon>
        <taxon>Pseudomonadota</taxon>
        <taxon>Gammaproteobacteria</taxon>
        <taxon>Enterobacterales</taxon>
        <taxon>Yersiniaceae</taxon>
        <taxon>Yersinia</taxon>
    </lineage>
</organism>
<reference key="1">
    <citation type="journal article" date="2001" name="Nature">
        <title>Genome sequence of Yersinia pestis, the causative agent of plague.</title>
        <authorList>
            <person name="Parkhill J."/>
            <person name="Wren B.W."/>
            <person name="Thomson N.R."/>
            <person name="Titball R.W."/>
            <person name="Holden M.T.G."/>
            <person name="Prentice M.B."/>
            <person name="Sebaihia M."/>
            <person name="James K.D."/>
            <person name="Churcher C.M."/>
            <person name="Mungall K.L."/>
            <person name="Baker S."/>
            <person name="Basham D."/>
            <person name="Bentley S.D."/>
            <person name="Brooks K."/>
            <person name="Cerdeno-Tarraga A.-M."/>
            <person name="Chillingworth T."/>
            <person name="Cronin A."/>
            <person name="Davies R.M."/>
            <person name="Davis P."/>
            <person name="Dougan G."/>
            <person name="Feltwell T."/>
            <person name="Hamlin N."/>
            <person name="Holroyd S."/>
            <person name="Jagels K."/>
            <person name="Karlyshev A.V."/>
            <person name="Leather S."/>
            <person name="Moule S."/>
            <person name="Oyston P.C.F."/>
            <person name="Quail M.A."/>
            <person name="Rutherford K.M."/>
            <person name="Simmonds M."/>
            <person name="Skelton J."/>
            <person name="Stevens K."/>
            <person name="Whitehead S."/>
            <person name="Barrell B.G."/>
        </authorList>
    </citation>
    <scope>NUCLEOTIDE SEQUENCE [LARGE SCALE GENOMIC DNA]</scope>
    <source>
        <strain>CO-92 / Biovar Orientalis</strain>
    </source>
</reference>
<reference key="2">
    <citation type="journal article" date="2004" name="DNA Res.">
        <title>Complete genome sequence of Yersinia pestis strain 91001, an isolate avirulent to humans.</title>
        <authorList>
            <person name="Song Y."/>
            <person name="Tong Z."/>
            <person name="Wang J."/>
            <person name="Wang L."/>
            <person name="Guo Z."/>
            <person name="Han Y."/>
            <person name="Zhang J."/>
            <person name="Pei D."/>
            <person name="Zhou D."/>
            <person name="Qin H."/>
            <person name="Pang X."/>
            <person name="Han Y."/>
            <person name="Zhai J."/>
            <person name="Li M."/>
            <person name="Cui B."/>
            <person name="Qi Z."/>
            <person name="Jin L."/>
            <person name="Dai R."/>
            <person name="Chen F."/>
            <person name="Li S."/>
            <person name="Ye C."/>
            <person name="Du Z."/>
            <person name="Lin W."/>
            <person name="Wang J."/>
            <person name="Yu J."/>
            <person name="Yang H."/>
            <person name="Wang J."/>
            <person name="Huang P."/>
            <person name="Yang R."/>
        </authorList>
    </citation>
    <scope>NUCLEOTIDE SEQUENCE [LARGE SCALE GENOMIC DNA]</scope>
    <source>
        <strain>91001 / Biovar Mediaevalis</strain>
    </source>
</reference>
<feature type="signal peptide" description="Tat-type signal" evidence="1">
    <location>
        <begin position="1"/>
        <end position="31"/>
    </location>
</feature>
<feature type="chain" id="PRO_0000046015" description="Periplasmic nitrate reductase" evidence="1">
    <location>
        <begin position="32"/>
        <end position="830"/>
    </location>
</feature>
<feature type="domain" description="4Fe-4S Mo/W bis-MGD-type" evidence="1">
    <location>
        <begin position="39"/>
        <end position="95"/>
    </location>
</feature>
<feature type="binding site" evidence="1">
    <location>
        <position position="46"/>
    </location>
    <ligand>
        <name>[4Fe-4S] cluster</name>
        <dbReference type="ChEBI" id="CHEBI:49883"/>
    </ligand>
</feature>
<feature type="binding site" evidence="1">
    <location>
        <position position="49"/>
    </location>
    <ligand>
        <name>[4Fe-4S] cluster</name>
        <dbReference type="ChEBI" id="CHEBI:49883"/>
    </ligand>
</feature>
<feature type="binding site" evidence="1">
    <location>
        <position position="53"/>
    </location>
    <ligand>
        <name>[4Fe-4S] cluster</name>
        <dbReference type="ChEBI" id="CHEBI:49883"/>
    </ligand>
</feature>
<feature type="binding site" evidence="1">
    <location>
        <position position="81"/>
    </location>
    <ligand>
        <name>[4Fe-4S] cluster</name>
        <dbReference type="ChEBI" id="CHEBI:49883"/>
    </ligand>
</feature>
<feature type="binding site" evidence="1">
    <location>
        <position position="83"/>
    </location>
    <ligand>
        <name>Mo-bis(molybdopterin guanine dinucleotide)</name>
        <dbReference type="ChEBI" id="CHEBI:60539"/>
    </ligand>
</feature>
<feature type="binding site" evidence="1">
    <location>
        <position position="150"/>
    </location>
    <ligand>
        <name>Mo-bis(molybdopterin guanine dinucleotide)</name>
        <dbReference type="ChEBI" id="CHEBI:60539"/>
    </ligand>
</feature>
<feature type="binding site" evidence="1">
    <location>
        <position position="175"/>
    </location>
    <ligand>
        <name>Mo-bis(molybdopterin guanine dinucleotide)</name>
        <dbReference type="ChEBI" id="CHEBI:60539"/>
    </ligand>
</feature>
<feature type="binding site" evidence="1">
    <location>
        <position position="179"/>
    </location>
    <ligand>
        <name>Mo-bis(molybdopterin guanine dinucleotide)</name>
        <dbReference type="ChEBI" id="CHEBI:60539"/>
    </ligand>
</feature>
<feature type="binding site" evidence="1">
    <location>
        <begin position="212"/>
        <end position="219"/>
    </location>
    <ligand>
        <name>Mo-bis(molybdopterin guanine dinucleotide)</name>
        <dbReference type="ChEBI" id="CHEBI:60539"/>
    </ligand>
</feature>
<feature type="binding site" evidence="1">
    <location>
        <begin position="243"/>
        <end position="247"/>
    </location>
    <ligand>
        <name>Mo-bis(molybdopterin guanine dinucleotide)</name>
        <dbReference type="ChEBI" id="CHEBI:60539"/>
    </ligand>
</feature>
<feature type="binding site" evidence="1">
    <location>
        <begin position="262"/>
        <end position="264"/>
    </location>
    <ligand>
        <name>Mo-bis(molybdopterin guanine dinucleotide)</name>
        <dbReference type="ChEBI" id="CHEBI:60539"/>
    </ligand>
</feature>
<feature type="binding site" evidence="1">
    <location>
        <position position="372"/>
    </location>
    <ligand>
        <name>Mo-bis(molybdopterin guanine dinucleotide)</name>
        <dbReference type="ChEBI" id="CHEBI:60539"/>
    </ligand>
</feature>
<feature type="binding site" evidence="1">
    <location>
        <position position="376"/>
    </location>
    <ligand>
        <name>Mo-bis(molybdopterin guanine dinucleotide)</name>
        <dbReference type="ChEBI" id="CHEBI:60539"/>
    </ligand>
</feature>
<feature type="binding site" evidence="1">
    <location>
        <position position="482"/>
    </location>
    <ligand>
        <name>Mo-bis(molybdopterin guanine dinucleotide)</name>
        <dbReference type="ChEBI" id="CHEBI:60539"/>
    </ligand>
</feature>
<feature type="binding site" evidence="1">
    <location>
        <begin position="508"/>
        <end position="509"/>
    </location>
    <ligand>
        <name>Mo-bis(molybdopterin guanine dinucleotide)</name>
        <dbReference type="ChEBI" id="CHEBI:60539"/>
    </ligand>
</feature>
<feature type="binding site" evidence="1">
    <location>
        <position position="531"/>
    </location>
    <ligand>
        <name>Mo-bis(molybdopterin guanine dinucleotide)</name>
        <dbReference type="ChEBI" id="CHEBI:60539"/>
    </ligand>
</feature>
<feature type="binding site" evidence="1">
    <location>
        <position position="558"/>
    </location>
    <ligand>
        <name>Mo-bis(molybdopterin guanine dinucleotide)</name>
        <dbReference type="ChEBI" id="CHEBI:60539"/>
    </ligand>
</feature>
<feature type="binding site" evidence="1">
    <location>
        <begin position="718"/>
        <end position="727"/>
    </location>
    <ligand>
        <name>Mo-bis(molybdopterin guanine dinucleotide)</name>
        <dbReference type="ChEBI" id="CHEBI:60539"/>
    </ligand>
</feature>
<feature type="binding site" evidence="1">
    <location>
        <position position="794"/>
    </location>
    <ligand>
        <name>substrate</name>
    </ligand>
</feature>
<feature type="binding site" evidence="1">
    <location>
        <position position="802"/>
    </location>
    <ligand>
        <name>Mo-bis(molybdopterin guanine dinucleotide)</name>
        <dbReference type="ChEBI" id="CHEBI:60539"/>
    </ligand>
</feature>
<feature type="binding site" evidence="1">
    <location>
        <position position="819"/>
    </location>
    <ligand>
        <name>Mo-bis(molybdopterin guanine dinucleotide)</name>
        <dbReference type="ChEBI" id="CHEBI:60539"/>
    </ligand>
</feature>
<feature type="sequence conflict" description="In Ref. 2; AAS62853." evidence="2" ref="2">
    <original>A</original>
    <variation>T</variation>
    <location>
        <position position="341"/>
    </location>
</feature>
<proteinExistence type="inferred from homology"/>
<protein>
    <recommendedName>
        <fullName evidence="1">Periplasmic nitrate reductase</fullName>
        <ecNumber evidence="1">1.9.6.1</ecNumber>
    </recommendedName>
</protein>